<dbReference type="EMBL" id="M12336">
    <property type="protein sequence ID" value="AAA22782.1"/>
    <property type="molecule type" value="Genomic_DNA"/>
</dbReference>
<dbReference type="PIR" id="A22810">
    <property type="entry name" value="A22810"/>
</dbReference>
<dbReference type="RefSeq" id="WP_013055933.1">
    <property type="nucleotide sequence ID" value="NZ_WWFB01000001.1"/>
</dbReference>
<dbReference type="SMR" id="P10572"/>
<dbReference type="STRING" id="1348908.GCA_000480335_01119"/>
<dbReference type="OMA" id="NEMKYEI"/>
<dbReference type="GO" id="GO:0003690">
    <property type="term" value="F:double-stranded DNA binding"/>
    <property type="evidence" value="ECO:0007669"/>
    <property type="project" value="InterPro"/>
</dbReference>
<dbReference type="GO" id="GO:0006265">
    <property type="term" value="P:DNA topological change"/>
    <property type="evidence" value="ECO:0007669"/>
    <property type="project" value="InterPro"/>
</dbReference>
<dbReference type="GO" id="GO:0030435">
    <property type="term" value="P:sporulation resulting in formation of a cellular spore"/>
    <property type="evidence" value="ECO:0007669"/>
    <property type="project" value="UniProtKB-KW"/>
</dbReference>
<dbReference type="Gene3D" id="6.10.10.80">
    <property type="entry name" value="Small, acid-soluble spore protein, alpha/beta type-like"/>
    <property type="match status" value="1"/>
</dbReference>
<dbReference type="InterPro" id="IPR001448">
    <property type="entry name" value="SASP_alpha/beta-type"/>
</dbReference>
<dbReference type="InterPro" id="IPR018126">
    <property type="entry name" value="SASP_alpha/beta-type_CS"/>
</dbReference>
<dbReference type="InterPro" id="IPR050847">
    <property type="entry name" value="SASP_DNA-binding"/>
</dbReference>
<dbReference type="InterPro" id="IPR038300">
    <property type="entry name" value="SASP_sf_alpha/beta"/>
</dbReference>
<dbReference type="PANTHER" id="PTHR36107">
    <property type="entry name" value="SMALL, ACID-SOLUBLE SPORE PROTEIN A"/>
    <property type="match status" value="1"/>
</dbReference>
<dbReference type="PANTHER" id="PTHR36107:SF1">
    <property type="entry name" value="SMALL, ACID-SOLUBLE SPORE PROTEIN A"/>
    <property type="match status" value="1"/>
</dbReference>
<dbReference type="Pfam" id="PF00269">
    <property type="entry name" value="SASP"/>
    <property type="match status" value="1"/>
</dbReference>
<dbReference type="PROSITE" id="PS00304">
    <property type="entry name" value="SASP_1"/>
    <property type="match status" value="1"/>
</dbReference>
<dbReference type="PROSITE" id="PS00684">
    <property type="entry name" value="SASP_2"/>
    <property type="match status" value="1"/>
</dbReference>
<name>SAS3_PRIMG</name>
<protein>
    <recommendedName>
        <fullName>Small, acid-soluble spore protein C3</fullName>
        <shortName>SASP</shortName>
    </recommendedName>
</protein>
<organism>
    <name type="scientific">Priestia megaterium</name>
    <name type="common">Bacillus megaterium</name>
    <dbReference type="NCBI Taxonomy" id="1404"/>
    <lineage>
        <taxon>Bacteria</taxon>
        <taxon>Bacillati</taxon>
        <taxon>Bacillota</taxon>
        <taxon>Bacilli</taxon>
        <taxon>Bacillales</taxon>
        <taxon>Bacillaceae</taxon>
        <taxon>Priestia</taxon>
    </lineage>
</organism>
<reference key="1">
    <citation type="journal article" date="1984" name="Gene">
        <title>Bacillus megaterium spore protein C-3: nucleotide sequence of its gene and the amino acid sequence at its spore protease cleavage site.</title>
        <authorList>
            <person name="Fliss E.R."/>
            <person name="Setlow P."/>
        </authorList>
    </citation>
    <scope>NUCLEOTIDE SEQUENCE [GENOMIC DNA]</scope>
</reference>
<accession>P10572</accession>
<comment type="function">
    <text>SASP are bound to spore DNA. They are double-stranded DNA-binding proteins that cause DNA to change to an a-like conformation. They protect the DNA backbone from chemical and enzymatic cleavage and are thus involved in dormant spore's high resistance to UV light.</text>
</comment>
<comment type="miscellaneous">
    <text>SASP are degraded in the first minutes of spore germination and provide amino acids for both new protein synthesis and metabolism.</text>
</comment>
<comment type="similarity">
    <text evidence="1">Belongs to the alpha/beta-type SASP family.</text>
</comment>
<proteinExistence type="inferred from homology"/>
<evidence type="ECO:0000305" key="1"/>
<gene>
    <name type="primary">SASP-C3</name>
</gene>
<feature type="chain" id="PRO_0000196296" description="Small, acid-soluble spore protein C3">
    <location>
        <begin position="1"/>
        <end position="65"/>
    </location>
</feature>
<feature type="site" description="Cleavage; by spore protease">
    <location>
        <begin position="22"/>
        <end position="23"/>
    </location>
</feature>
<keyword id="KW-0238">DNA-binding</keyword>
<keyword id="KW-0749">Sporulation</keyword>
<sequence>MARTNKLLTPGVEQFLDQYKYEIAQEFGVTLGSDTAARSNGSVGGEITKRLVQQAQAHLSGSTQK</sequence>